<evidence type="ECO:0000255" key="1">
    <source>
        <dbReference type="HAMAP-Rule" id="MF_00079"/>
    </source>
</evidence>
<gene>
    <name evidence="1" type="primary">hisG</name>
    <name type="ordered locus">Cj1597</name>
</gene>
<dbReference type="EC" id="2.4.2.17" evidence="1"/>
<dbReference type="EMBL" id="AL111168">
    <property type="protein sequence ID" value="CAL35694.1"/>
    <property type="molecule type" value="Genomic_DNA"/>
</dbReference>
<dbReference type="PIR" id="C81255">
    <property type="entry name" value="C81255"/>
</dbReference>
<dbReference type="RefSeq" id="WP_002858407.1">
    <property type="nucleotide sequence ID" value="NZ_SZUC01000002.1"/>
</dbReference>
<dbReference type="RefSeq" id="YP_002344966.1">
    <property type="nucleotide sequence ID" value="NC_002163.1"/>
</dbReference>
<dbReference type="SMR" id="Q9PM78"/>
<dbReference type="IntAct" id="Q9PM78">
    <property type="interactions" value="1"/>
</dbReference>
<dbReference type="STRING" id="192222.Cj1597"/>
<dbReference type="PaxDb" id="192222-Cj1597"/>
<dbReference type="EnsemblBacteria" id="CAL35694">
    <property type="protein sequence ID" value="CAL35694"/>
    <property type="gene ID" value="Cj1597"/>
</dbReference>
<dbReference type="GeneID" id="905867"/>
<dbReference type="KEGG" id="cje:Cj1597"/>
<dbReference type="PATRIC" id="fig|192222.6.peg.1573"/>
<dbReference type="eggNOG" id="COG0040">
    <property type="taxonomic scope" value="Bacteria"/>
</dbReference>
<dbReference type="HOGENOM" id="CLU_038115_1_0_7"/>
<dbReference type="OrthoDB" id="9801867at2"/>
<dbReference type="BRENDA" id="2.4.2.17">
    <property type="organism ID" value="1087"/>
</dbReference>
<dbReference type="UniPathway" id="UPA00031">
    <property type="reaction ID" value="UER00006"/>
</dbReference>
<dbReference type="Proteomes" id="UP000000799">
    <property type="component" value="Chromosome"/>
</dbReference>
<dbReference type="GO" id="GO:0005737">
    <property type="term" value="C:cytoplasm"/>
    <property type="evidence" value="ECO:0007669"/>
    <property type="project" value="UniProtKB-SubCell"/>
</dbReference>
<dbReference type="GO" id="GO:0005524">
    <property type="term" value="F:ATP binding"/>
    <property type="evidence" value="ECO:0007669"/>
    <property type="project" value="UniProtKB-KW"/>
</dbReference>
<dbReference type="GO" id="GO:0003879">
    <property type="term" value="F:ATP phosphoribosyltransferase activity"/>
    <property type="evidence" value="ECO:0007669"/>
    <property type="project" value="UniProtKB-UniRule"/>
</dbReference>
<dbReference type="GO" id="GO:0000287">
    <property type="term" value="F:magnesium ion binding"/>
    <property type="evidence" value="ECO:0007669"/>
    <property type="project" value="UniProtKB-UniRule"/>
</dbReference>
<dbReference type="GO" id="GO:0000105">
    <property type="term" value="P:L-histidine biosynthetic process"/>
    <property type="evidence" value="ECO:0007669"/>
    <property type="project" value="UniProtKB-UniRule"/>
</dbReference>
<dbReference type="CDD" id="cd13592">
    <property type="entry name" value="PBP2_HisGL2"/>
    <property type="match status" value="1"/>
</dbReference>
<dbReference type="FunFam" id="3.30.70.120:FF:000002">
    <property type="entry name" value="ATP phosphoribosyltransferase"/>
    <property type="match status" value="1"/>
</dbReference>
<dbReference type="FunFam" id="3.40.190.10:FF:000008">
    <property type="entry name" value="ATP phosphoribosyltransferase"/>
    <property type="match status" value="1"/>
</dbReference>
<dbReference type="Gene3D" id="3.30.70.120">
    <property type="match status" value="1"/>
</dbReference>
<dbReference type="Gene3D" id="3.40.190.10">
    <property type="entry name" value="Periplasmic binding protein-like II"/>
    <property type="match status" value="2"/>
</dbReference>
<dbReference type="HAMAP" id="MF_00079">
    <property type="entry name" value="HisG_Long"/>
    <property type="match status" value="1"/>
</dbReference>
<dbReference type="InterPro" id="IPR020621">
    <property type="entry name" value="ATP-PRT_HisG_long"/>
</dbReference>
<dbReference type="InterPro" id="IPR013820">
    <property type="entry name" value="ATP_PRibTrfase_cat"/>
</dbReference>
<dbReference type="InterPro" id="IPR018198">
    <property type="entry name" value="ATP_PRibTrfase_CS"/>
</dbReference>
<dbReference type="InterPro" id="IPR001348">
    <property type="entry name" value="ATP_PRibTrfase_HisG"/>
</dbReference>
<dbReference type="InterPro" id="IPR013115">
    <property type="entry name" value="HisG_C"/>
</dbReference>
<dbReference type="InterPro" id="IPR011322">
    <property type="entry name" value="N-reg_PII-like_a/b"/>
</dbReference>
<dbReference type="InterPro" id="IPR015867">
    <property type="entry name" value="N-reg_PII/ATP_PRibTrfase_C"/>
</dbReference>
<dbReference type="NCBIfam" id="TIGR00070">
    <property type="entry name" value="hisG"/>
    <property type="match status" value="1"/>
</dbReference>
<dbReference type="NCBIfam" id="TIGR03455">
    <property type="entry name" value="HisG_C-term"/>
    <property type="match status" value="1"/>
</dbReference>
<dbReference type="PANTHER" id="PTHR21403:SF8">
    <property type="entry name" value="ATP PHOSPHORIBOSYLTRANSFERASE"/>
    <property type="match status" value="1"/>
</dbReference>
<dbReference type="PANTHER" id="PTHR21403">
    <property type="entry name" value="ATP PHOSPHORIBOSYLTRANSFERASE ATP-PRTASE"/>
    <property type="match status" value="1"/>
</dbReference>
<dbReference type="Pfam" id="PF01634">
    <property type="entry name" value="HisG"/>
    <property type="match status" value="1"/>
</dbReference>
<dbReference type="Pfam" id="PF08029">
    <property type="entry name" value="HisG_C"/>
    <property type="match status" value="1"/>
</dbReference>
<dbReference type="SUPFAM" id="SSF54913">
    <property type="entry name" value="GlnB-like"/>
    <property type="match status" value="1"/>
</dbReference>
<dbReference type="SUPFAM" id="SSF53850">
    <property type="entry name" value="Periplasmic binding protein-like II"/>
    <property type="match status" value="1"/>
</dbReference>
<dbReference type="PROSITE" id="PS01316">
    <property type="entry name" value="ATP_P_PHORIBOSYLTR"/>
    <property type="match status" value="1"/>
</dbReference>
<proteinExistence type="inferred from homology"/>
<sequence length="299" mass="33639">MQENTRLRIAIQKSGRLSKESIELLSECGVKMHIHEQSLIAFSTNLPIDILRVRDDDIPGLIFDGVVDLGIIGENVLEENELERQSLGENPSYKLLKKLDFGYCRLSLALPQENKFQNLKDFEGLRIATSYPQLLKRFMKENGINYKNCTLTGSVEVAPRANLADAICDLVSSGATLQANNLKEVKVIYESRACLIQKENALSKEKQALVDKIMLRVAGVMQARESKYIMLHAPKEKLDKIQALLPGVERPTILPLAHDEKNVALHMVSKENLFWETMEALKEEGASSILVLPIEKMLK</sequence>
<feature type="chain" id="PRO_0000151839" description="ATP phosphoribosyltransferase">
    <location>
        <begin position="1"/>
        <end position="299"/>
    </location>
</feature>
<protein>
    <recommendedName>
        <fullName evidence="1">ATP phosphoribosyltransferase</fullName>
        <shortName evidence="1">ATP-PRT</shortName>
        <shortName evidence="1">ATP-PRTase</shortName>
        <ecNumber evidence="1">2.4.2.17</ecNumber>
    </recommendedName>
</protein>
<keyword id="KW-0028">Amino-acid biosynthesis</keyword>
<keyword id="KW-0067">ATP-binding</keyword>
<keyword id="KW-0963">Cytoplasm</keyword>
<keyword id="KW-0328">Glycosyltransferase</keyword>
<keyword id="KW-0368">Histidine biosynthesis</keyword>
<keyword id="KW-0460">Magnesium</keyword>
<keyword id="KW-0479">Metal-binding</keyword>
<keyword id="KW-0547">Nucleotide-binding</keyword>
<keyword id="KW-1185">Reference proteome</keyword>
<keyword id="KW-0808">Transferase</keyword>
<comment type="function">
    <text evidence="1">Catalyzes the condensation of ATP and 5-phosphoribose 1-diphosphate to form N'-(5'-phosphoribosyl)-ATP (PR-ATP). Has a crucial role in the pathway because the rate of histidine biosynthesis seems to be controlled primarily by regulation of HisG enzymatic activity.</text>
</comment>
<comment type="catalytic activity">
    <reaction evidence="1">
        <text>1-(5-phospho-beta-D-ribosyl)-ATP + diphosphate = 5-phospho-alpha-D-ribose 1-diphosphate + ATP</text>
        <dbReference type="Rhea" id="RHEA:18473"/>
        <dbReference type="ChEBI" id="CHEBI:30616"/>
        <dbReference type="ChEBI" id="CHEBI:33019"/>
        <dbReference type="ChEBI" id="CHEBI:58017"/>
        <dbReference type="ChEBI" id="CHEBI:73183"/>
        <dbReference type="EC" id="2.4.2.17"/>
    </reaction>
</comment>
<comment type="cofactor">
    <cofactor evidence="1">
        <name>Mg(2+)</name>
        <dbReference type="ChEBI" id="CHEBI:18420"/>
    </cofactor>
</comment>
<comment type="activity regulation">
    <text evidence="1">Feedback inhibited by histidine.</text>
</comment>
<comment type="pathway">
    <text evidence="1">Amino-acid biosynthesis; L-histidine biosynthesis; L-histidine from 5-phospho-alpha-D-ribose 1-diphosphate: step 1/9.</text>
</comment>
<comment type="subcellular location">
    <subcellularLocation>
        <location evidence="1">Cytoplasm</location>
    </subcellularLocation>
</comment>
<comment type="similarity">
    <text evidence="1">Belongs to the ATP phosphoribosyltransferase family. Long subfamily.</text>
</comment>
<organism>
    <name type="scientific">Campylobacter jejuni subsp. jejuni serotype O:2 (strain ATCC 700819 / NCTC 11168)</name>
    <dbReference type="NCBI Taxonomy" id="192222"/>
    <lineage>
        <taxon>Bacteria</taxon>
        <taxon>Pseudomonadati</taxon>
        <taxon>Campylobacterota</taxon>
        <taxon>Epsilonproteobacteria</taxon>
        <taxon>Campylobacterales</taxon>
        <taxon>Campylobacteraceae</taxon>
        <taxon>Campylobacter</taxon>
    </lineage>
</organism>
<name>HIS1_CAMJE</name>
<reference key="1">
    <citation type="journal article" date="2000" name="Nature">
        <title>The genome sequence of the food-borne pathogen Campylobacter jejuni reveals hypervariable sequences.</title>
        <authorList>
            <person name="Parkhill J."/>
            <person name="Wren B.W."/>
            <person name="Mungall K.L."/>
            <person name="Ketley J.M."/>
            <person name="Churcher C.M."/>
            <person name="Basham D."/>
            <person name="Chillingworth T."/>
            <person name="Davies R.M."/>
            <person name="Feltwell T."/>
            <person name="Holroyd S."/>
            <person name="Jagels K."/>
            <person name="Karlyshev A.V."/>
            <person name="Moule S."/>
            <person name="Pallen M.J."/>
            <person name="Penn C.W."/>
            <person name="Quail M.A."/>
            <person name="Rajandream M.A."/>
            <person name="Rutherford K.M."/>
            <person name="van Vliet A.H.M."/>
            <person name="Whitehead S."/>
            <person name="Barrell B.G."/>
        </authorList>
    </citation>
    <scope>NUCLEOTIDE SEQUENCE [LARGE SCALE GENOMIC DNA]</scope>
    <source>
        <strain>ATCC 700819 / NCTC 11168</strain>
    </source>
</reference>
<accession>Q9PM78</accession>
<accession>Q0P831</accession>